<evidence type="ECO:0000255" key="1">
    <source>
        <dbReference type="HAMAP-Rule" id="MF_01818"/>
    </source>
</evidence>
<accession>C0MDJ9</accession>
<proteinExistence type="inferred from homology"/>
<dbReference type="EC" id="3.1.26.11" evidence="1"/>
<dbReference type="EMBL" id="FM204884">
    <property type="protein sequence ID" value="CAW98830.1"/>
    <property type="molecule type" value="Genomic_DNA"/>
</dbReference>
<dbReference type="SMR" id="C0MDJ9"/>
<dbReference type="KEGG" id="seq:SZO_07160"/>
<dbReference type="eggNOG" id="COG1234">
    <property type="taxonomic scope" value="Bacteria"/>
</dbReference>
<dbReference type="HOGENOM" id="CLU_031317_2_0_9"/>
<dbReference type="Proteomes" id="UP000001368">
    <property type="component" value="Chromosome"/>
</dbReference>
<dbReference type="GO" id="GO:0042781">
    <property type="term" value="F:3'-tRNA processing endoribonuclease activity"/>
    <property type="evidence" value="ECO:0007669"/>
    <property type="project" value="UniProtKB-UniRule"/>
</dbReference>
<dbReference type="GO" id="GO:0008270">
    <property type="term" value="F:zinc ion binding"/>
    <property type="evidence" value="ECO:0007669"/>
    <property type="project" value="UniProtKB-UniRule"/>
</dbReference>
<dbReference type="CDD" id="cd07717">
    <property type="entry name" value="RNaseZ_ZiPD-like_MBL-fold"/>
    <property type="match status" value="1"/>
</dbReference>
<dbReference type="FunFam" id="3.60.15.10:FF:000002">
    <property type="entry name" value="Ribonuclease Z"/>
    <property type="match status" value="1"/>
</dbReference>
<dbReference type="Gene3D" id="3.60.15.10">
    <property type="entry name" value="Ribonuclease Z/Hydroxyacylglutathione hydrolase-like"/>
    <property type="match status" value="1"/>
</dbReference>
<dbReference type="HAMAP" id="MF_01818">
    <property type="entry name" value="RNase_Z_BN"/>
    <property type="match status" value="1"/>
</dbReference>
<dbReference type="InterPro" id="IPR001279">
    <property type="entry name" value="Metallo-B-lactamas"/>
</dbReference>
<dbReference type="InterPro" id="IPR036866">
    <property type="entry name" value="RibonucZ/Hydroxyglut_hydro"/>
</dbReference>
<dbReference type="InterPro" id="IPR013471">
    <property type="entry name" value="RNase_Z/BN"/>
</dbReference>
<dbReference type="NCBIfam" id="NF000801">
    <property type="entry name" value="PRK00055.1-3"/>
    <property type="match status" value="1"/>
</dbReference>
<dbReference type="NCBIfam" id="TIGR02651">
    <property type="entry name" value="RNase_Z"/>
    <property type="match status" value="1"/>
</dbReference>
<dbReference type="PANTHER" id="PTHR46018">
    <property type="entry name" value="ZINC PHOSPHODIESTERASE ELAC PROTEIN 1"/>
    <property type="match status" value="1"/>
</dbReference>
<dbReference type="PANTHER" id="PTHR46018:SF2">
    <property type="entry name" value="ZINC PHOSPHODIESTERASE ELAC PROTEIN 1"/>
    <property type="match status" value="1"/>
</dbReference>
<dbReference type="Pfam" id="PF00753">
    <property type="entry name" value="Lactamase_B"/>
    <property type="match status" value="1"/>
</dbReference>
<dbReference type="Pfam" id="PF12706">
    <property type="entry name" value="Lactamase_B_2"/>
    <property type="match status" value="1"/>
</dbReference>
<dbReference type="SUPFAM" id="SSF56281">
    <property type="entry name" value="Metallo-hydrolase/oxidoreductase"/>
    <property type="match status" value="1"/>
</dbReference>
<organism>
    <name type="scientific">Streptococcus equi subsp. zooepidemicus (strain H70)</name>
    <dbReference type="NCBI Taxonomy" id="553483"/>
    <lineage>
        <taxon>Bacteria</taxon>
        <taxon>Bacillati</taxon>
        <taxon>Bacillota</taxon>
        <taxon>Bacilli</taxon>
        <taxon>Lactobacillales</taxon>
        <taxon>Streptococcaceae</taxon>
        <taxon>Streptococcus</taxon>
    </lineage>
</organism>
<reference key="1">
    <citation type="journal article" date="2009" name="PLoS Pathog.">
        <title>Genomic evidence for the evolution of Streptococcus equi: host restriction, increased virulence, and genetic exchange with human pathogens.</title>
        <authorList>
            <person name="Holden M.T.G."/>
            <person name="Heather Z."/>
            <person name="Paillot R."/>
            <person name="Steward K.F."/>
            <person name="Webb K."/>
            <person name="Ainslie F."/>
            <person name="Jourdan T."/>
            <person name="Bason N.C."/>
            <person name="Holroyd N.E."/>
            <person name="Mungall K."/>
            <person name="Quail M.A."/>
            <person name="Sanders M."/>
            <person name="Simmonds M."/>
            <person name="Willey D."/>
            <person name="Brooks K."/>
            <person name="Aanensen D.M."/>
            <person name="Spratt B.G."/>
            <person name="Jolley K.A."/>
            <person name="Maiden M.C.J."/>
            <person name="Kehoe M."/>
            <person name="Chanter N."/>
            <person name="Bentley S.D."/>
            <person name="Robinson C."/>
            <person name="Maskell D.J."/>
            <person name="Parkhill J."/>
            <person name="Waller A.S."/>
        </authorList>
    </citation>
    <scope>NUCLEOTIDE SEQUENCE [LARGE SCALE GENOMIC DNA]</scope>
    <source>
        <strain>H70</strain>
    </source>
</reference>
<comment type="function">
    <text evidence="1">Zinc phosphodiesterase, which displays some tRNA 3'-processing endonuclease activity. Probably involved in tRNA maturation, by removing a 3'-trailer from precursor tRNA.</text>
</comment>
<comment type="catalytic activity">
    <reaction evidence="1">
        <text>Endonucleolytic cleavage of RNA, removing extra 3' nucleotides from tRNA precursor, generating 3' termini of tRNAs. A 3'-hydroxy group is left at the tRNA terminus and a 5'-phosphoryl group is left at the trailer molecule.</text>
        <dbReference type="EC" id="3.1.26.11"/>
    </reaction>
</comment>
<comment type="cofactor">
    <cofactor evidence="1">
        <name>Zn(2+)</name>
        <dbReference type="ChEBI" id="CHEBI:29105"/>
    </cofactor>
    <text evidence="1">Binds 2 Zn(2+) ions.</text>
</comment>
<comment type="subunit">
    <text evidence="1">Homodimer.</text>
</comment>
<comment type="similarity">
    <text evidence="1">Belongs to the RNase Z family.</text>
</comment>
<name>RNZ_STRS7</name>
<feature type="chain" id="PRO_1000216013" description="Ribonuclease Z">
    <location>
        <begin position="1"/>
        <end position="309"/>
    </location>
</feature>
<feature type="active site" description="Proton acceptor" evidence="1">
    <location>
        <position position="67"/>
    </location>
</feature>
<feature type="binding site" evidence="1">
    <location>
        <position position="63"/>
    </location>
    <ligand>
        <name>Zn(2+)</name>
        <dbReference type="ChEBI" id="CHEBI:29105"/>
        <label>1</label>
        <note>catalytic</note>
    </ligand>
</feature>
<feature type="binding site" evidence="1">
    <location>
        <position position="65"/>
    </location>
    <ligand>
        <name>Zn(2+)</name>
        <dbReference type="ChEBI" id="CHEBI:29105"/>
        <label>1</label>
        <note>catalytic</note>
    </ligand>
</feature>
<feature type="binding site" evidence="1">
    <location>
        <position position="67"/>
    </location>
    <ligand>
        <name>Zn(2+)</name>
        <dbReference type="ChEBI" id="CHEBI:29105"/>
        <label>2</label>
        <note>catalytic</note>
    </ligand>
</feature>
<feature type="binding site" evidence="1">
    <location>
        <position position="68"/>
    </location>
    <ligand>
        <name>Zn(2+)</name>
        <dbReference type="ChEBI" id="CHEBI:29105"/>
        <label>2</label>
        <note>catalytic</note>
    </ligand>
</feature>
<feature type="binding site" evidence="1">
    <location>
        <position position="145"/>
    </location>
    <ligand>
        <name>Zn(2+)</name>
        <dbReference type="ChEBI" id="CHEBI:29105"/>
        <label>1</label>
        <note>catalytic</note>
    </ligand>
</feature>
<feature type="binding site" evidence="1">
    <location>
        <position position="216"/>
    </location>
    <ligand>
        <name>Zn(2+)</name>
        <dbReference type="ChEBI" id="CHEBI:29105"/>
        <label>1</label>
        <note>catalytic</note>
    </ligand>
</feature>
<feature type="binding site" evidence="1">
    <location>
        <position position="216"/>
    </location>
    <ligand>
        <name>Zn(2+)</name>
        <dbReference type="ChEBI" id="CHEBI:29105"/>
        <label>2</label>
        <note>catalytic</note>
    </ligand>
</feature>
<feature type="binding site" evidence="1">
    <location>
        <position position="274"/>
    </location>
    <ligand>
        <name>Zn(2+)</name>
        <dbReference type="ChEBI" id="CHEBI:29105"/>
        <label>2</label>
        <note>catalytic</note>
    </ligand>
</feature>
<gene>
    <name evidence="1" type="primary">rnz</name>
    <name type="ordered locus">SZO_07160</name>
</gene>
<protein>
    <recommendedName>
        <fullName evidence="1">Ribonuclease Z</fullName>
        <shortName evidence="1">RNase Z</shortName>
        <ecNumber evidence="1">3.1.26.11</ecNumber>
    </recommendedName>
    <alternativeName>
        <fullName evidence="1">tRNA 3 endonuclease</fullName>
    </alternativeName>
    <alternativeName>
        <fullName evidence="1">tRNase Z</fullName>
    </alternativeName>
</protein>
<sequence length="309" mass="34576">MELQFLGTGAGQPAKHRNVSSLVLKLLDEINEVWMFDCGEGTQRQILETTIKPRKIKKIFITHLHGDHIFGLPGFLSSRAFQASEEQTDLEIYGPVGIKSYVTNSIRISGSKLPYQIHYHEFDDTSMGKILETDKFIVYAERLAHTIFCMGYRVVQKDLEGTLDAEALRAAGVPFGPLFGKVKNGQDIELEDGTKIFAKDFISEPRKGKIITIIGDTRKTSASVRLAKDADVLVHESTYGKGDERMARNHGHSTNMQAAQIARDAGAKRLLLNHVSARFLGRDCRQMEKDAATIFENVKVVRDLEEVII</sequence>
<keyword id="KW-0255">Endonuclease</keyword>
<keyword id="KW-0378">Hydrolase</keyword>
<keyword id="KW-0479">Metal-binding</keyword>
<keyword id="KW-0540">Nuclease</keyword>
<keyword id="KW-0819">tRNA processing</keyword>
<keyword id="KW-0862">Zinc</keyword>